<feature type="chain" id="PRO_1000136640" description="UPF0266 membrane protein YobD">
    <location>
        <begin position="1"/>
        <end position="152"/>
    </location>
</feature>
<feature type="transmembrane region" description="Helical" evidence="1">
    <location>
        <begin position="6"/>
        <end position="26"/>
    </location>
</feature>
<feature type="transmembrane region" description="Helical" evidence="1">
    <location>
        <begin position="45"/>
        <end position="65"/>
    </location>
</feature>
<feature type="transmembrane region" description="Helical" evidence="1">
    <location>
        <begin position="67"/>
        <end position="87"/>
    </location>
</feature>
<sequence length="152" mass="17615">MTITDLVLILFIAALLAFAIYDQFIMPRRNGPTLLAIPLLRRGRIDSVIFVGLIVILIYNNVTNHGALITTWLLSALALMGFYIFWIRVPKIIFKQKGFFFANVWIEYSRIKAMNLSEDGVLVMQLEQRRLLIRVRNIDDLEKIYKLLVSTQ</sequence>
<gene>
    <name evidence="1" type="primary">yobD</name>
    <name type="ordered locus">ECUMN_2112</name>
</gene>
<name>YOBD_ECOLU</name>
<reference key="1">
    <citation type="journal article" date="2009" name="PLoS Genet.">
        <title>Organised genome dynamics in the Escherichia coli species results in highly diverse adaptive paths.</title>
        <authorList>
            <person name="Touchon M."/>
            <person name="Hoede C."/>
            <person name="Tenaillon O."/>
            <person name="Barbe V."/>
            <person name="Baeriswyl S."/>
            <person name="Bidet P."/>
            <person name="Bingen E."/>
            <person name="Bonacorsi S."/>
            <person name="Bouchier C."/>
            <person name="Bouvet O."/>
            <person name="Calteau A."/>
            <person name="Chiapello H."/>
            <person name="Clermont O."/>
            <person name="Cruveiller S."/>
            <person name="Danchin A."/>
            <person name="Diard M."/>
            <person name="Dossat C."/>
            <person name="Karoui M.E."/>
            <person name="Frapy E."/>
            <person name="Garry L."/>
            <person name="Ghigo J.M."/>
            <person name="Gilles A.M."/>
            <person name="Johnson J."/>
            <person name="Le Bouguenec C."/>
            <person name="Lescat M."/>
            <person name="Mangenot S."/>
            <person name="Martinez-Jehanne V."/>
            <person name="Matic I."/>
            <person name="Nassif X."/>
            <person name="Oztas S."/>
            <person name="Petit M.A."/>
            <person name="Pichon C."/>
            <person name="Rouy Z."/>
            <person name="Ruf C.S."/>
            <person name="Schneider D."/>
            <person name="Tourret J."/>
            <person name="Vacherie B."/>
            <person name="Vallenet D."/>
            <person name="Medigue C."/>
            <person name="Rocha E.P.C."/>
            <person name="Denamur E."/>
        </authorList>
    </citation>
    <scope>NUCLEOTIDE SEQUENCE [LARGE SCALE GENOMIC DNA]</scope>
    <source>
        <strain>UMN026 / ExPEC</strain>
    </source>
</reference>
<keyword id="KW-0997">Cell inner membrane</keyword>
<keyword id="KW-1003">Cell membrane</keyword>
<keyword id="KW-0472">Membrane</keyword>
<keyword id="KW-0812">Transmembrane</keyword>
<keyword id="KW-1133">Transmembrane helix</keyword>
<accession>B7NBG6</accession>
<organism>
    <name type="scientific">Escherichia coli O17:K52:H18 (strain UMN026 / ExPEC)</name>
    <dbReference type="NCBI Taxonomy" id="585056"/>
    <lineage>
        <taxon>Bacteria</taxon>
        <taxon>Pseudomonadati</taxon>
        <taxon>Pseudomonadota</taxon>
        <taxon>Gammaproteobacteria</taxon>
        <taxon>Enterobacterales</taxon>
        <taxon>Enterobacteriaceae</taxon>
        <taxon>Escherichia</taxon>
    </lineage>
</organism>
<protein>
    <recommendedName>
        <fullName evidence="1">UPF0266 membrane protein YobD</fullName>
    </recommendedName>
</protein>
<proteinExistence type="inferred from homology"/>
<dbReference type="EMBL" id="CU928163">
    <property type="protein sequence ID" value="CAR13306.1"/>
    <property type="molecule type" value="Genomic_DNA"/>
</dbReference>
<dbReference type="RefSeq" id="WP_000156255.1">
    <property type="nucleotide sequence ID" value="NC_011751.1"/>
</dbReference>
<dbReference type="RefSeq" id="YP_002412837.1">
    <property type="nucleotide sequence ID" value="NC_011751.1"/>
</dbReference>
<dbReference type="STRING" id="585056.ECUMN_2112"/>
<dbReference type="KEGG" id="eum:ECUMN_2112"/>
<dbReference type="PATRIC" id="fig|585056.7.peg.2299"/>
<dbReference type="HOGENOM" id="CLU_133645_0_0_6"/>
<dbReference type="Proteomes" id="UP000007097">
    <property type="component" value="Chromosome"/>
</dbReference>
<dbReference type="GO" id="GO:0005886">
    <property type="term" value="C:plasma membrane"/>
    <property type="evidence" value="ECO:0007669"/>
    <property type="project" value="UniProtKB-SubCell"/>
</dbReference>
<dbReference type="HAMAP" id="MF_01071">
    <property type="entry name" value="UPF0266"/>
    <property type="match status" value="1"/>
</dbReference>
<dbReference type="InterPro" id="IPR009328">
    <property type="entry name" value="DUF986"/>
</dbReference>
<dbReference type="NCBIfam" id="NF002791">
    <property type="entry name" value="PRK02913.1"/>
    <property type="match status" value="1"/>
</dbReference>
<dbReference type="Pfam" id="PF06173">
    <property type="entry name" value="DUF986"/>
    <property type="match status" value="1"/>
</dbReference>
<dbReference type="PIRSF" id="PIRSF020687">
    <property type="entry name" value="UCP020687"/>
    <property type="match status" value="1"/>
</dbReference>
<comment type="subcellular location">
    <subcellularLocation>
        <location evidence="1">Cell inner membrane</location>
        <topology evidence="1">Multi-pass membrane protein</topology>
    </subcellularLocation>
</comment>
<comment type="similarity">
    <text evidence="1">Belongs to the UPF0266 family.</text>
</comment>
<evidence type="ECO:0000255" key="1">
    <source>
        <dbReference type="HAMAP-Rule" id="MF_01071"/>
    </source>
</evidence>